<sequence>MITDTCVLHIEEVLELLPHRFPFLLVDRVLNFEKGKFLRAVKNVSFNEPFFQGHFPGKPIFPGVLILEAMAQATGILAFKSTGKLAPGELYYFAAIDAARFKRPVQPGDQMILDVEFIKERRGIARFKGIATVNEEMACEASMMCARRKEI</sequence>
<comment type="function">
    <text evidence="1">Involved in unsaturated fatty acids biosynthesis. Catalyzes the dehydration of short chain beta-hydroxyacyl-ACPs and long chain saturated and unsaturated beta-hydroxyacyl-ACPs.</text>
</comment>
<comment type="catalytic activity">
    <reaction evidence="1">
        <text>a (3R)-hydroxyacyl-[ACP] = a (2E)-enoyl-[ACP] + H2O</text>
        <dbReference type="Rhea" id="RHEA:13097"/>
        <dbReference type="Rhea" id="RHEA-COMP:9925"/>
        <dbReference type="Rhea" id="RHEA-COMP:9945"/>
        <dbReference type="ChEBI" id="CHEBI:15377"/>
        <dbReference type="ChEBI" id="CHEBI:78784"/>
        <dbReference type="ChEBI" id="CHEBI:78827"/>
        <dbReference type="EC" id="4.2.1.59"/>
    </reaction>
</comment>
<comment type="subcellular location">
    <subcellularLocation>
        <location evidence="1">Cytoplasm</location>
    </subcellularLocation>
</comment>
<comment type="similarity">
    <text evidence="1">Belongs to the thioester dehydratase family. FabZ subfamily.</text>
</comment>
<name>FABZ_BLOPB</name>
<proteinExistence type="inferred from homology"/>
<organism>
    <name type="scientific">Blochmanniella pennsylvanica (strain BPEN)</name>
    <dbReference type="NCBI Taxonomy" id="291272"/>
    <lineage>
        <taxon>Bacteria</taxon>
        <taxon>Pseudomonadati</taxon>
        <taxon>Pseudomonadota</taxon>
        <taxon>Gammaproteobacteria</taxon>
        <taxon>Enterobacterales</taxon>
        <taxon>Enterobacteriaceae</taxon>
        <taxon>ant endosymbionts</taxon>
        <taxon>Candidatus Blochmanniella</taxon>
    </lineage>
</organism>
<reference key="1">
    <citation type="journal article" date="2005" name="Genome Res.">
        <title>Genome sequence of Blochmannia pennsylvanicus indicates parallel evolutionary trends among bacterial mutualists of insects.</title>
        <authorList>
            <person name="Degnan P.H."/>
            <person name="Lazarus A.B."/>
            <person name="Wernegreen J.J."/>
        </authorList>
    </citation>
    <scope>NUCLEOTIDE SEQUENCE [LARGE SCALE GENOMIC DNA]</scope>
    <source>
        <strain>BPEN</strain>
    </source>
</reference>
<evidence type="ECO:0000255" key="1">
    <source>
        <dbReference type="HAMAP-Rule" id="MF_00406"/>
    </source>
</evidence>
<feature type="chain" id="PRO_0000230804" description="3-hydroxyacyl-[acyl-carrier-protein] dehydratase FabZ">
    <location>
        <begin position="1"/>
        <end position="151"/>
    </location>
</feature>
<feature type="active site" evidence="1">
    <location>
        <position position="54"/>
    </location>
</feature>
<accession>Q493C1</accession>
<gene>
    <name evidence="1" type="primary">fabZ</name>
    <name type="ordered locus">BPEN_290</name>
</gene>
<keyword id="KW-0963">Cytoplasm</keyword>
<keyword id="KW-0441">Lipid A biosynthesis</keyword>
<keyword id="KW-0444">Lipid biosynthesis</keyword>
<keyword id="KW-0443">Lipid metabolism</keyword>
<keyword id="KW-0456">Lyase</keyword>
<keyword id="KW-1185">Reference proteome</keyword>
<dbReference type="EC" id="4.2.1.59" evidence="1"/>
<dbReference type="EMBL" id="CP000016">
    <property type="protein sequence ID" value="AAZ40921.1"/>
    <property type="molecule type" value="Genomic_DNA"/>
</dbReference>
<dbReference type="SMR" id="Q493C1"/>
<dbReference type="STRING" id="291272.BPEN_290"/>
<dbReference type="KEGG" id="bpn:BPEN_290"/>
<dbReference type="eggNOG" id="COG0764">
    <property type="taxonomic scope" value="Bacteria"/>
</dbReference>
<dbReference type="HOGENOM" id="CLU_078912_1_0_6"/>
<dbReference type="OrthoDB" id="9772788at2"/>
<dbReference type="Proteomes" id="UP000007794">
    <property type="component" value="Chromosome"/>
</dbReference>
<dbReference type="GO" id="GO:0005737">
    <property type="term" value="C:cytoplasm"/>
    <property type="evidence" value="ECO:0007669"/>
    <property type="project" value="UniProtKB-SubCell"/>
</dbReference>
<dbReference type="GO" id="GO:0016020">
    <property type="term" value="C:membrane"/>
    <property type="evidence" value="ECO:0007669"/>
    <property type="project" value="GOC"/>
</dbReference>
<dbReference type="GO" id="GO:0019171">
    <property type="term" value="F:(3R)-hydroxyacyl-[acyl-carrier-protein] dehydratase activity"/>
    <property type="evidence" value="ECO:0007669"/>
    <property type="project" value="UniProtKB-EC"/>
</dbReference>
<dbReference type="GO" id="GO:0006633">
    <property type="term" value="P:fatty acid biosynthetic process"/>
    <property type="evidence" value="ECO:0007669"/>
    <property type="project" value="UniProtKB-UniRule"/>
</dbReference>
<dbReference type="GO" id="GO:0009245">
    <property type="term" value="P:lipid A biosynthetic process"/>
    <property type="evidence" value="ECO:0007669"/>
    <property type="project" value="UniProtKB-UniRule"/>
</dbReference>
<dbReference type="CDD" id="cd01288">
    <property type="entry name" value="FabZ"/>
    <property type="match status" value="1"/>
</dbReference>
<dbReference type="FunFam" id="3.10.129.10:FF:000001">
    <property type="entry name" value="3-hydroxyacyl-[acyl-carrier-protein] dehydratase FabZ"/>
    <property type="match status" value="1"/>
</dbReference>
<dbReference type="Gene3D" id="3.10.129.10">
    <property type="entry name" value="Hotdog Thioesterase"/>
    <property type="match status" value="1"/>
</dbReference>
<dbReference type="HAMAP" id="MF_00406">
    <property type="entry name" value="FabZ"/>
    <property type="match status" value="1"/>
</dbReference>
<dbReference type="InterPro" id="IPR013114">
    <property type="entry name" value="FabA_FabZ"/>
</dbReference>
<dbReference type="InterPro" id="IPR010084">
    <property type="entry name" value="FabZ"/>
</dbReference>
<dbReference type="InterPro" id="IPR029069">
    <property type="entry name" value="HotDog_dom_sf"/>
</dbReference>
<dbReference type="NCBIfam" id="TIGR01750">
    <property type="entry name" value="fabZ"/>
    <property type="match status" value="1"/>
</dbReference>
<dbReference type="NCBIfam" id="NF000582">
    <property type="entry name" value="PRK00006.1"/>
    <property type="match status" value="1"/>
</dbReference>
<dbReference type="PANTHER" id="PTHR30272">
    <property type="entry name" value="3-HYDROXYACYL-[ACYL-CARRIER-PROTEIN] DEHYDRATASE"/>
    <property type="match status" value="1"/>
</dbReference>
<dbReference type="PANTHER" id="PTHR30272:SF1">
    <property type="entry name" value="3-HYDROXYACYL-[ACYL-CARRIER-PROTEIN] DEHYDRATASE"/>
    <property type="match status" value="1"/>
</dbReference>
<dbReference type="Pfam" id="PF07977">
    <property type="entry name" value="FabA"/>
    <property type="match status" value="1"/>
</dbReference>
<dbReference type="SUPFAM" id="SSF54637">
    <property type="entry name" value="Thioesterase/thiol ester dehydrase-isomerase"/>
    <property type="match status" value="1"/>
</dbReference>
<protein>
    <recommendedName>
        <fullName evidence="1">3-hydroxyacyl-[acyl-carrier-protein] dehydratase FabZ</fullName>
        <ecNumber evidence="1">4.2.1.59</ecNumber>
    </recommendedName>
    <alternativeName>
        <fullName evidence="1">(3R)-hydroxymyristoyl-[acyl-carrier-protein] dehydratase</fullName>
        <shortName evidence="1">(3R)-hydroxymyristoyl-ACP dehydrase</shortName>
    </alternativeName>
    <alternativeName>
        <fullName evidence="1">Beta-hydroxyacyl-ACP dehydratase</fullName>
    </alternativeName>
</protein>